<name>PPK1_VIBVU</name>
<keyword id="KW-0067">ATP-binding</keyword>
<keyword id="KW-0418">Kinase</keyword>
<keyword id="KW-0460">Magnesium</keyword>
<keyword id="KW-0479">Metal-binding</keyword>
<keyword id="KW-0547">Nucleotide-binding</keyword>
<keyword id="KW-0597">Phosphoprotein</keyword>
<keyword id="KW-0677">Repeat</keyword>
<keyword id="KW-0808">Transferase</keyword>
<feature type="chain" id="PRO_0000128668" description="Polyphosphate kinase">
    <location>
        <begin position="1"/>
        <end position="700"/>
    </location>
</feature>
<feature type="domain" description="PLD phosphodiesterase 1" evidence="1">
    <location>
        <begin position="428"/>
        <end position="462"/>
    </location>
</feature>
<feature type="domain" description="PLD phosphodiesterase 2" evidence="1">
    <location>
        <begin position="585"/>
        <end position="615"/>
    </location>
</feature>
<feature type="active site" description="Phosphohistidine intermediate" evidence="1">
    <location>
        <position position="433"/>
    </location>
</feature>
<feature type="binding site" evidence="1">
    <location>
        <position position="45"/>
    </location>
    <ligand>
        <name>ATP</name>
        <dbReference type="ChEBI" id="CHEBI:30616"/>
    </ligand>
</feature>
<feature type="binding site" evidence="1">
    <location>
        <position position="373"/>
    </location>
    <ligand>
        <name>Mg(2+)</name>
        <dbReference type="ChEBI" id="CHEBI:18420"/>
    </ligand>
</feature>
<feature type="binding site" evidence="1">
    <location>
        <position position="403"/>
    </location>
    <ligand>
        <name>Mg(2+)</name>
        <dbReference type="ChEBI" id="CHEBI:18420"/>
    </ligand>
</feature>
<feature type="binding site" evidence="1">
    <location>
        <position position="466"/>
    </location>
    <ligand>
        <name>ATP</name>
        <dbReference type="ChEBI" id="CHEBI:30616"/>
    </ligand>
</feature>
<feature type="binding site" evidence="1">
    <location>
        <position position="562"/>
    </location>
    <ligand>
        <name>ATP</name>
        <dbReference type="ChEBI" id="CHEBI:30616"/>
    </ligand>
</feature>
<feature type="binding site" evidence="1">
    <location>
        <position position="590"/>
    </location>
    <ligand>
        <name>ATP</name>
        <dbReference type="ChEBI" id="CHEBI:30616"/>
    </ligand>
</feature>
<accession>Q8DEW2</accession>
<sequence>MSADKFYIEKELSWLSFNERVLQEAADKTVPLIERIRFLGIFSNNLDEFYKVRFSDVKRRILINREQGGNDISKHLLSKMQSKALKLNERFDELYNELIRDMARRHIFLVNESQLDEAQQKWIIKYFQKEVLPHITPLMLTDEIDVLQFLKDEYAYIAVELKQQEQAKYALLEIPTDHLPRFIMVPEQKGKRKKTIILLDNIIRFCLNDIFRGFFDYDELNGYAMKMTRDAEYDLRHEVEYSLLEQMSEGLSQRLTALPVRFVYERDMPEDMLKYLCYKLKISHYDSLIPGGRYHNFKDFIAFPNVGRDYLENKPLPPLACADFEGYANAFDAIRNQDILLHYPYHSFEHITELVRQASFDPKVVSIKINVYRVAKNSRLMNSLIDAVHNGKRVTVVVELQARFDEEANIEWSKLLTDAGVHVIFGVPGMKIHAKLLLITRREEQGFVRYAHIGTGNFHERTARIYTDFSLLTADQELAAEVRGVFSYIMNPFRPIKFRHLIVSPRNSRSQLYRLLDREIHNAQAGKKASITLKVNNLVDKGLISKLYAASSAGVKIRMIIRGMCSLVPGLEGISENIEIISIIDRFLEHPRVLVVHNDGDPQVFISSADWMERNIDNRIEVMSPVRDARIKQRIIDILSIQFTDTVKARRIDKEMSNNYVERGNRKKIRSQIAIYDYLKNVEKHTRKQKGQVEPNDNNQ</sequence>
<organism>
    <name type="scientific">Vibrio vulnificus (strain CMCP6)</name>
    <dbReference type="NCBI Taxonomy" id="216895"/>
    <lineage>
        <taxon>Bacteria</taxon>
        <taxon>Pseudomonadati</taxon>
        <taxon>Pseudomonadota</taxon>
        <taxon>Gammaproteobacteria</taxon>
        <taxon>Vibrionales</taxon>
        <taxon>Vibrionaceae</taxon>
        <taxon>Vibrio</taxon>
    </lineage>
</organism>
<gene>
    <name evidence="1" type="primary">ppk</name>
    <name type="ordered locus">VV1_0464</name>
</gene>
<proteinExistence type="inferred from homology"/>
<evidence type="ECO:0000255" key="1">
    <source>
        <dbReference type="HAMAP-Rule" id="MF_00347"/>
    </source>
</evidence>
<protein>
    <recommendedName>
        <fullName evidence="1">Polyphosphate kinase</fullName>
        <ecNumber evidence="1">2.7.4.1</ecNumber>
    </recommendedName>
    <alternativeName>
        <fullName evidence="1">ATP-polyphosphate phosphotransferase</fullName>
    </alternativeName>
    <alternativeName>
        <fullName evidence="1">Polyphosphoric acid kinase</fullName>
    </alternativeName>
</protein>
<comment type="function">
    <text evidence="1">Catalyzes the reversible transfer of the terminal phosphate of ATP to form a long-chain polyphosphate (polyP).</text>
</comment>
<comment type="catalytic activity">
    <reaction evidence="1">
        <text>[phosphate](n) + ATP = [phosphate](n+1) + ADP</text>
        <dbReference type="Rhea" id="RHEA:19573"/>
        <dbReference type="Rhea" id="RHEA-COMP:9859"/>
        <dbReference type="Rhea" id="RHEA-COMP:14280"/>
        <dbReference type="ChEBI" id="CHEBI:16838"/>
        <dbReference type="ChEBI" id="CHEBI:30616"/>
        <dbReference type="ChEBI" id="CHEBI:456216"/>
        <dbReference type="EC" id="2.7.4.1"/>
    </reaction>
</comment>
<comment type="cofactor">
    <cofactor evidence="1">
        <name>Mg(2+)</name>
        <dbReference type="ChEBI" id="CHEBI:18420"/>
    </cofactor>
</comment>
<comment type="PTM">
    <text evidence="1">An intermediate of this reaction is the autophosphorylated ppk in which a phosphate is covalently linked to a histidine residue through a N-P bond.</text>
</comment>
<comment type="similarity">
    <text evidence="1">Belongs to the polyphosphate kinase 1 (PPK1) family.</text>
</comment>
<dbReference type="EC" id="2.7.4.1" evidence="1"/>
<dbReference type="EMBL" id="AE016795">
    <property type="protein sequence ID" value="AAO08986.1"/>
    <property type="molecule type" value="Genomic_DNA"/>
</dbReference>
<dbReference type="RefSeq" id="WP_011078562.1">
    <property type="nucleotide sequence ID" value="NC_004459.3"/>
</dbReference>
<dbReference type="SMR" id="Q8DEW2"/>
<dbReference type="KEGG" id="vvu:VV1_0464"/>
<dbReference type="HOGENOM" id="CLU_009678_5_0_6"/>
<dbReference type="Proteomes" id="UP000002275">
    <property type="component" value="Chromosome 1"/>
</dbReference>
<dbReference type="GO" id="GO:0009358">
    <property type="term" value="C:polyphosphate kinase complex"/>
    <property type="evidence" value="ECO:0007669"/>
    <property type="project" value="InterPro"/>
</dbReference>
<dbReference type="GO" id="GO:0005524">
    <property type="term" value="F:ATP binding"/>
    <property type="evidence" value="ECO:0007669"/>
    <property type="project" value="UniProtKB-KW"/>
</dbReference>
<dbReference type="GO" id="GO:0046872">
    <property type="term" value="F:metal ion binding"/>
    <property type="evidence" value="ECO:0007669"/>
    <property type="project" value="UniProtKB-KW"/>
</dbReference>
<dbReference type="GO" id="GO:0008976">
    <property type="term" value="F:polyphosphate kinase activity"/>
    <property type="evidence" value="ECO:0007669"/>
    <property type="project" value="UniProtKB-UniRule"/>
</dbReference>
<dbReference type="GO" id="GO:0006799">
    <property type="term" value="P:polyphosphate biosynthetic process"/>
    <property type="evidence" value="ECO:0007669"/>
    <property type="project" value="UniProtKB-UniRule"/>
</dbReference>
<dbReference type="CDD" id="cd09164">
    <property type="entry name" value="PLDc_EcPPK1_C1_like"/>
    <property type="match status" value="1"/>
</dbReference>
<dbReference type="FunFam" id="3.30.870.10:FF:000001">
    <property type="entry name" value="Polyphosphate kinase"/>
    <property type="match status" value="1"/>
</dbReference>
<dbReference type="Gene3D" id="3.30.870.10">
    <property type="entry name" value="Endonuclease Chain A"/>
    <property type="match status" value="2"/>
</dbReference>
<dbReference type="Gene3D" id="3.30.1840.10">
    <property type="entry name" value="Polyphosphate kinase middle domain"/>
    <property type="match status" value="1"/>
</dbReference>
<dbReference type="Gene3D" id="1.20.58.310">
    <property type="entry name" value="Polyphosphate kinase N-terminal domain"/>
    <property type="match status" value="1"/>
</dbReference>
<dbReference type="HAMAP" id="MF_00347">
    <property type="entry name" value="Polyphosphate_kinase"/>
    <property type="match status" value="1"/>
</dbReference>
<dbReference type="InterPro" id="IPR001736">
    <property type="entry name" value="PLipase_D/transphosphatidylase"/>
</dbReference>
<dbReference type="InterPro" id="IPR003414">
    <property type="entry name" value="PP_kinase"/>
</dbReference>
<dbReference type="InterPro" id="IPR041108">
    <property type="entry name" value="PP_kinase_C_1"/>
</dbReference>
<dbReference type="InterPro" id="IPR024953">
    <property type="entry name" value="PP_kinase_middle"/>
</dbReference>
<dbReference type="InterPro" id="IPR036830">
    <property type="entry name" value="PP_kinase_middle_dom_sf"/>
</dbReference>
<dbReference type="InterPro" id="IPR025200">
    <property type="entry name" value="PPK_C_dom2"/>
</dbReference>
<dbReference type="InterPro" id="IPR025198">
    <property type="entry name" value="PPK_N_dom"/>
</dbReference>
<dbReference type="InterPro" id="IPR036832">
    <property type="entry name" value="PPK_N_dom_sf"/>
</dbReference>
<dbReference type="NCBIfam" id="TIGR03705">
    <property type="entry name" value="poly_P_kin"/>
    <property type="match status" value="1"/>
</dbReference>
<dbReference type="NCBIfam" id="NF003917">
    <property type="entry name" value="PRK05443.1-1"/>
    <property type="match status" value="1"/>
</dbReference>
<dbReference type="PANTHER" id="PTHR30218">
    <property type="entry name" value="POLYPHOSPHATE KINASE"/>
    <property type="match status" value="1"/>
</dbReference>
<dbReference type="PANTHER" id="PTHR30218:SF0">
    <property type="entry name" value="POLYPHOSPHATE KINASE"/>
    <property type="match status" value="1"/>
</dbReference>
<dbReference type="Pfam" id="PF02503">
    <property type="entry name" value="PP_kinase"/>
    <property type="match status" value="1"/>
</dbReference>
<dbReference type="Pfam" id="PF13090">
    <property type="entry name" value="PP_kinase_C"/>
    <property type="match status" value="1"/>
</dbReference>
<dbReference type="Pfam" id="PF17941">
    <property type="entry name" value="PP_kinase_C_1"/>
    <property type="match status" value="1"/>
</dbReference>
<dbReference type="Pfam" id="PF13089">
    <property type="entry name" value="PP_kinase_N"/>
    <property type="match status" value="1"/>
</dbReference>
<dbReference type="PIRSF" id="PIRSF015589">
    <property type="entry name" value="PP_kinase"/>
    <property type="match status" value="1"/>
</dbReference>
<dbReference type="SUPFAM" id="SSF56024">
    <property type="entry name" value="Phospholipase D/nuclease"/>
    <property type="match status" value="2"/>
</dbReference>
<dbReference type="SUPFAM" id="SSF143724">
    <property type="entry name" value="PHP14-like"/>
    <property type="match status" value="1"/>
</dbReference>
<dbReference type="SUPFAM" id="SSF140356">
    <property type="entry name" value="PPK N-terminal domain-like"/>
    <property type="match status" value="1"/>
</dbReference>
<dbReference type="PROSITE" id="PS50035">
    <property type="entry name" value="PLD"/>
    <property type="match status" value="2"/>
</dbReference>
<reference key="1">
    <citation type="submission" date="2002-12" db="EMBL/GenBank/DDBJ databases">
        <title>Complete genome sequence of Vibrio vulnificus CMCP6.</title>
        <authorList>
            <person name="Rhee J.H."/>
            <person name="Kim S.Y."/>
            <person name="Chung S.S."/>
            <person name="Kim J.J."/>
            <person name="Moon Y.H."/>
            <person name="Jeong H."/>
            <person name="Choy H.E."/>
        </authorList>
    </citation>
    <scope>NUCLEOTIDE SEQUENCE [LARGE SCALE GENOMIC DNA]</scope>
    <source>
        <strain>CMCP6</strain>
    </source>
</reference>